<name>METXS_BURVG</name>
<accession>A4JIS1</accession>
<proteinExistence type="inferred from homology"/>
<comment type="function">
    <text evidence="1">Transfers a succinyl group from succinyl-CoA to L-homoserine, forming succinyl-L-homoserine.</text>
</comment>
<comment type="catalytic activity">
    <reaction evidence="1">
        <text>L-homoserine + succinyl-CoA = O-succinyl-L-homoserine + CoA</text>
        <dbReference type="Rhea" id="RHEA:22008"/>
        <dbReference type="ChEBI" id="CHEBI:57287"/>
        <dbReference type="ChEBI" id="CHEBI:57292"/>
        <dbReference type="ChEBI" id="CHEBI:57476"/>
        <dbReference type="ChEBI" id="CHEBI:57661"/>
        <dbReference type="EC" id="2.3.1.46"/>
    </reaction>
</comment>
<comment type="pathway">
    <text evidence="1">Amino-acid biosynthesis; L-methionine biosynthesis via de novo pathway; O-succinyl-L-homoserine from L-homoserine: step 1/1.</text>
</comment>
<comment type="subunit">
    <text evidence="1">Homodimer.</text>
</comment>
<comment type="subcellular location">
    <subcellularLocation>
        <location evidence="1">Cytoplasm</location>
    </subcellularLocation>
</comment>
<comment type="similarity">
    <text evidence="1">Belongs to the AB hydrolase superfamily. MetX family.</text>
</comment>
<evidence type="ECO:0000255" key="1">
    <source>
        <dbReference type="HAMAP-Rule" id="MF_00296"/>
    </source>
</evidence>
<gene>
    <name evidence="1" type="primary">metXS</name>
    <name type="ordered locus">Bcep1808_3183</name>
</gene>
<sequence length="381" mass="41971">MESIGIVAPQTMHFAEPLRLQSGSVIGNYQLVVETYGELNAARSNAVLVCHALNASHHVAGIYADDPRSTGWWDNMVGPGKPLDTNRFFVIGVNNLGSCFGSTGPMSDDPSTGQPYGARFPVVTVEDWVHAQARVADAFGIDRFAAVMGGSLGGMQALAWSLMYPDRVAHCIDIASTPKLSAQNIAFNEVARSAILSDPDFHGGNYYAHGVKPKRGLRVARMIGHITYLSDDDMAEKFGRALRRADGALDAYNFSFDVEFEVESYLRYQGDKFADYFDANTYLLITRALDYFDPAKAFDGNLTAALAHTQAKYLIASFSTDWRFAPARSREIVKALLDNKRTVSYAEIDAPHGHDAFLLDDARYHNLIRAYYERIANEVGA</sequence>
<feature type="chain" id="PRO_1000021876" description="Homoserine O-succinyltransferase">
    <location>
        <begin position="1"/>
        <end position="381"/>
    </location>
</feature>
<feature type="domain" description="AB hydrolase-1" evidence="1">
    <location>
        <begin position="45"/>
        <end position="360"/>
    </location>
</feature>
<feature type="active site" description="Nucleophile" evidence="1">
    <location>
        <position position="151"/>
    </location>
</feature>
<feature type="active site" evidence="1">
    <location>
        <position position="321"/>
    </location>
</feature>
<feature type="active site" evidence="1">
    <location>
        <position position="354"/>
    </location>
</feature>
<feature type="binding site" evidence="1">
    <location>
        <position position="221"/>
    </location>
    <ligand>
        <name>substrate</name>
    </ligand>
</feature>
<feature type="binding site" evidence="1">
    <location>
        <position position="355"/>
    </location>
    <ligand>
        <name>substrate</name>
    </ligand>
</feature>
<feature type="site" description="Important for acyl-CoA specificity" evidence="1">
    <location>
        <position position="323"/>
    </location>
</feature>
<reference key="1">
    <citation type="submission" date="2007-03" db="EMBL/GenBank/DDBJ databases">
        <title>Complete sequence of chromosome 1 of Burkholderia vietnamiensis G4.</title>
        <authorList>
            <consortium name="US DOE Joint Genome Institute"/>
            <person name="Copeland A."/>
            <person name="Lucas S."/>
            <person name="Lapidus A."/>
            <person name="Barry K."/>
            <person name="Detter J.C."/>
            <person name="Glavina del Rio T."/>
            <person name="Hammon N."/>
            <person name="Israni S."/>
            <person name="Dalin E."/>
            <person name="Tice H."/>
            <person name="Pitluck S."/>
            <person name="Chain P."/>
            <person name="Malfatti S."/>
            <person name="Shin M."/>
            <person name="Vergez L."/>
            <person name="Schmutz J."/>
            <person name="Larimer F."/>
            <person name="Land M."/>
            <person name="Hauser L."/>
            <person name="Kyrpides N."/>
            <person name="Tiedje J."/>
            <person name="Richardson P."/>
        </authorList>
    </citation>
    <scope>NUCLEOTIDE SEQUENCE [LARGE SCALE GENOMIC DNA]</scope>
    <source>
        <strain>G4 / LMG 22486</strain>
    </source>
</reference>
<keyword id="KW-0012">Acyltransferase</keyword>
<keyword id="KW-0028">Amino-acid biosynthesis</keyword>
<keyword id="KW-0963">Cytoplasm</keyword>
<keyword id="KW-0486">Methionine biosynthesis</keyword>
<keyword id="KW-0808">Transferase</keyword>
<dbReference type="EC" id="2.3.1.46" evidence="1"/>
<dbReference type="EMBL" id="CP000614">
    <property type="protein sequence ID" value="ABO56174.1"/>
    <property type="molecule type" value="Genomic_DNA"/>
</dbReference>
<dbReference type="SMR" id="A4JIS1"/>
<dbReference type="ESTHER" id="burvg-metx">
    <property type="family name" value="Homoserine_transacetylase"/>
</dbReference>
<dbReference type="KEGG" id="bvi:Bcep1808_3183"/>
<dbReference type="eggNOG" id="COG2021">
    <property type="taxonomic scope" value="Bacteria"/>
</dbReference>
<dbReference type="HOGENOM" id="CLU_028760_1_2_4"/>
<dbReference type="UniPathway" id="UPA00051">
    <property type="reaction ID" value="UER00075"/>
</dbReference>
<dbReference type="Proteomes" id="UP000002287">
    <property type="component" value="Chromosome 1"/>
</dbReference>
<dbReference type="GO" id="GO:0005737">
    <property type="term" value="C:cytoplasm"/>
    <property type="evidence" value="ECO:0007669"/>
    <property type="project" value="UniProtKB-SubCell"/>
</dbReference>
<dbReference type="GO" id="GO:0004414">
    <property type="term" value="F:homoserine O-acetyltransferase activity"/>
    <property type="evidence" value="ECO:0007669"/>
    <property type="project" value="TreeGrafter"/>
</dbReference>
<dbReference type="GO" id="GO:0008899">
    <property type="term" value="F:homoserine O-succinyltransferase activity"/>
    <property type="evidence" value="ECO:0007669"/>
    <property type="project" value="UniProtKB-UniRule"/>
</dbReference>
<dbReference type="GO" id="GO:0009092">
    <property type="term" value="P:homoserine metabolic process"/>
    <property type="evidence" value="ECO:0007669"/>
    <property type="project" value="TreeGrafter"/>
</dbReference>
<dbReference type="GO" id="GO:0009086">
    <property type="term" value="P:methionine biosynthetic process"/>
    <property type="evidence" value="ECO:0007669"/>
    <property type="project" value="UniProtKB-UniRule"/>
</dbReference>
<dbReference type="FunFam" id="1.10.1740.110:FF:000001">
    <property type="entry name" value="Homoserine O-acetyltransferase"/>
    <property type="match status" value="1"/>
</dbReference>
<dbReference type="Gene3D" id="1.10.1740.110">
    <property type="match status" value="1"/>
</dbReference>
<dbReference type="Gene3D" id="3.40.50.1820">
    <property type="entry name" value="alpha/beta hydrolase"/>
    <property type="match status" value="1"/>
</dbReference>
<dbReference type="HAMAP" id="MF_00296">
    <property type="entry name" value="MetX_acyltransf"/>
    <property type="match status" value="1"/>
</dbReference>
<dbReference type="InterPro" id="IPR000073">
    <property type="entry name" value="AB_hydrolase_1"/>
</dbReference>
<dbReference type="InterPro" id="IPR029058">
    <property type="entry name" value="AB_hydrolase_fold"/>
</dbReference>
<dbReference type="InterPro" id="IPR008220">
    <property type="entry name" value="HAT_MetX-like"/>
</dbReference>
<dbReference type="NCBIfam" id="TIGR01392">
    <property type="entry name" value="homoserO_Ac_trn"/>
    <property type="match status" value="1"/>
</dbReference>
<dbReference type="NCBIfam" id="NF001209">
    <property type="entry name" value="PRK00175.1"/>
    <property type="match status" value="1"/>
</dbReference>
<dbReference type="PANTHER" id="PTHR32268">
    <property type="entry name" value="HOMOSERINE O-ACETYLTRANSFERASE"/>
    <property type="match status" value="1"/>
</dbReference>
<dbReference type="PANTHER" id="PTHR32268:SF11">
    <property type="entry name" value="HOMOSERINE O-ACETYLTRANSFERASE"/>
    <property type="match status" value="1"/>
</dbReference>
<dbReference type="Pfam" id="PF00561">
    <property type="entry name" value="Abhydrolase_1"/>
    <property type="match status" value="1"/>
</dbReference>
<dbReference type="PIRSF" id="PIRSF000443">
    <property type="entry name" value="Homoser_Ac_trans"/>
    <property type="match status" value="1"/>
</dbReference>
<dbReference type="SUPFAM" id="SSF53474">
    <property type="entry name" value="alpha/beta-Hydrolases"/>
    <property type="match status" value="1"/>
</dbReference>
<protein>
    <recommendedName>
        <fullName evidence="1">Homoserine O-succinyltransferase</fullName>
        <shortName evidence="1">HST</shortName>
        <ecNumber evidence="1">2.3.1.46</ecNumber>
    </recommendedName>
    <alternativeName>
        <fullName evidence="1">Homoserine transsuccinylase</fullName>
        <shortName evidence="1">HTS</shortName>
    </alternativeName>
</protein>
<organism>
    <name type="scientific">Burkholderia vietnamiensis (strain G4 / LMG 22486)</name>
    <name type="common">Burkholderia cepacia (strain R1808)</name>
    <dbReference type="NCBI Taxonomy" id="269482"/>
    <lineage>
        <taxon>Bacteria</taxon>
        <taxon>Pseudomonadati</taxon>
        <taxon>Pseudomonadota</taxon>
        <taxon>Betaproteobacteria</taxon>
        <taxon>Burkholderiales</taxon>
        <taxon>Burkholderiaceae</taxon>
        <taxon>Burkholderia</taxon>
        <taxon>Burkholderia cepacia complex</taxon>
    </lineage>
</organism>